<evidence type="ECO:0000255" key="1"/>
<evidence type="ECO:0000255" key="2">
    <source>
        <dbReference type="PROSITE-ProRule" id="PRU00691"/>
    </source>
</evidence>
<evidence type="ECO:0000305" key="3"/>
<feature type="signal peptide" evidence="1">
    <location>
        <begin position="1"/>
        <end position="22"/>
    </location>
</feature>
<feature type="chain" id="PRO_0000400041" description="5'-adenylylsulfate reductase-like 4">
    <location>
        <begin position="23"/>
        <end position="310"/>
    </location>
</feature>
<feature type="transmembrane region" description="Helical" evidence="1">
    <location>
        <begin position="217"/>
        <end position="237"/>
    </location>
</feature>
<feature type="domain" description="Thioredoxin" evidence="2">
    <location>
        <begin position="49"/>
        <end position="168"/>
    </location>
</feature>
<feature type="glycosylation site" description="N-linked (GlcNAc...) asparagine" evidence="1">
    <location>
        <position position="143"/>
    </location>
</feature>
<feature type="glycosylation site" description="N-linked (GlcNAc...) asparagine" evidence="1">
    <location>
        <position position="190"/>
    </location>
</feature>
<feature type="splice variant" id="VSP_039984" description="In isoform 2." evidence="3">
    <location>
        <begin position="97"/>
        <end position="125"/>
    </location>
</feature>
<keyword id="KW-0025">Alternative splicing</keyword>
<keyword id="KW-0325">Glycoprotein</keyword>
<keyword id="KW-0472">Membrane</keyword>
<keyword id="KW-1185">Reference proteome</keyword>
<keyword id="KW-0732">Signal</keyword>
<keyword id="KW-0812">Transmembrane</keyword>
<keyword id="KW-1133">Transmembrane helix</keyword>
<reference key="1">
    <citation type="journal article" date="2000" name="Nature">
        <title>Sequence and analysis of chromosome 1 of the plant Arabidopsis thaliana.</title>
        <authorList>
            <person name="Theologis A."/>
            <person name="Ecker J.R."/>
            <person name="Palm C.J."/>
            <person name="Federspiel N.A."/>
            <person name="Kaul S."/>
            <person name="White O."/>
            <person name="Alonso J."/>
            <person name="Altafi H."/>
            <person name="Araujo R."/>
            <person name="Bowman C.L."/>
            <person name="Brooks S.Y."/>
            <person name="Buehler E."/>
            <person name="Chan A."/>
            <person name="Chao Q."/>
            <person name="Chen H."/>
            <person name="Cheuk R.F."/>
            <person name="Chin C.W."/>
            <person name="Chung M.K."/>
            <person name="Conn L."/>
            <person name="Conway A.B."/>
            <person name="Conway A.R."/>
            <person name="Creasy T.H."/>
            <person name="Dewar K."/>
            <person name="Dunn P."/>
            <person name="Etgu P."/>
            <person name="Feldblyum T.V."/>
            <person name="Feng J.-D."/>
            <person name="Fong B."/>
            <person name="Fujii C.Y."/>
            <person name="Gill J.E."/>
            <person name="Goldsmith A.D."/>
            <person name="Haas B."/>
            <person name="Hansen N.F."/>
            <person name="Hughes B."/>
            <person name="Huizar L."/>
            <person name="Hunter J.L."/>
            <person name="Jenkins J."/>
            <person name="Johnson-Hopson C."/>
            <person name="Khan S."/>
            <person name="Khaykin E."/>
            <person name="Kim C.J."/>
            <person name="Koo H.L."/>
            <person name="Kremenetskaia I."/>
            <person name="Kurtz D.B."/>
            <person name="Kwan A."/>
            <person name="Lam B."/>
            <person name="Langin-Hooper S."/>
            <person name="Lee A."/>
            <person name="Lee J.M."/>
            <person name="Lenz C.A."/>
            <person name="Li J.H."/>
            <person name="Li Y.-P."/>
            <person name="Lin X."/>
            <person name="Liu S.X."/>
            <person name="Liu Z.A."/>
            <person name="Luros J.S."/>
            <person name="Maiti R."/>
            <person name="Marziali A."/>
            <person name="Militscher J."/>
            <person name="Miranda M."/>
            <person name="Nguyen M."/>
            <person name="Nierman W.C."/>
            <person name="Osborne B.I."/>
            <person name="Pai G."/>
            <person name="Peterson J."/>
            <person name="Pham P.K."/>
            <person name="Rizzo M."/>
            <person name="Rooney T."/>
            <person name="Rowley D."/>
            <person name="Sakano H."/>
            <person name="Salzberg S.L."/>
            <person name="Schwartz J.R."/>
            <person name="Shinn P."/>
            <person name="Southwick A.M."/>
            <person name="Sun H."/>
            <person name="Tallon L.J."/>
            <person name="Tambunga G."/>
            <person name="Toriumi M.J."/>
            <person name="Town C.D."/>
            <person name="Utterback T."/>
            <person name="Van Aken S."/>
            <person name="Vaysberg M."/>
            <person name="Vysotskaia V.S."/>
            <person name="Walker M."/>
            <person name="Wu D."/>
            <person name="Yu G."/>
            <person name="Fraser C.M."/>
            <person name="Venter J.C."/>
            <person name="Davis R.W."/>
        </authorList>
    </citation>
    <scope>NUCLEOTIDE SEQUENCE [LARGE SCALE GENOMIC DNA]</scope>
    <source>
        <strain>cv. Columbia</strain>
    </source>
</reference>
<reference key="2">
    <citation type="journal article" date="2017" name="Plant J.">
        <title>Araport11: a complete reannotation of the Arabidopsis thaliana reference genome.</title>
        <authorList>
            <person name="Cheng C.Y."/>
            <person name="Krishnakumar V."/>
            <person name="Chan A.P."/>
            <person name="Thibaud-Nissen F."/>
            <person name="Schobel S."/>
            <person name="Town C.D."/>
        </authorList>
    </citation>
    <scope>GENOME REANNOTATION</scope>
    <source>
        <strain>cv. Columbia</strain>
    </source>
</reference>
<reference key="3">
    <citation type="journal article" date="2003" name="Science">
        <title>Empirical analysis of transcriptional activity in the Arabidopsis genome.</title>
        <authorList>
            <person name="Yamada K."/>
            <person name="Lim J."/>
            <person name="Dale J.M."/>
            <person name="Chen H."/>
            <person name="Shinn P."/>
            <person name="Palm C.J."/>
            <person name="Southwick A.M."/>
            <person name="Wu H.C."/>
            <person name="Kim C.J."/>
            <person name="Nguyen M."/>
            <person name="Pham P.K."/>
            <person name="Cheuk R.F."/>
            <person name="Karlin-Newmann G."/>
            <person name="Liu S.X."/>
            <person name="Lam B."/>
            <person name="Sakano H."/>
            <person name="Wu T."/>
            <person name="Yu G."/>
            <person name="Miranda M."/>
            <person name="Quach H.L."/>
            <person name="Tripp M."/>
            <person name="Chang C.H."/>
            <person name="Lee J.M."/>
            <person name="Toriumi M.J."/>
            <person name="Chan M.M."/>
            <person name="Tang C.C."/>
            <person name="Onodera C.S."/>
            <person name="Deng J.M."/>
            <person name="Akiyama K."/>
            <person name="Ansari Y."/>
            <person name="Arakawa T."/>
            <person name="Banh J."/>
            <person name="Banno F."/>
            <person name="Bowser L."/>
            <person name="Brooks S.Y."/>
            <person name="Carninci P."/>
            <person name="Chao Q."/>
            <person name="Choy N."/>
            <person name="Enju A."/>
            <person name="Goldsmith A.D."/>
            <person name="Gurjal M."/>
            <person name="Hansen N.F."/>
            <person name="Hayashizaki Y."/>
            <person name="Johnson-Hopson C."/>
            <person name="Hsuan V.W."/>
            <person name="Iida K."/>
            <person name="Karnes M."/>
            <person name="Khan S."/>
            <person name="Koesema E."/>
            <person name="Ishida J."/>
            <person name="Jiang P.X."/>
            <person name="Jones T."/>
            <person name="Kawai J."/>
            <person name="Kamiya A."/>
            <person name="Meyers C."/>
            <person name="Nakajima M."/>
            <person name="Narusaka M."/>
            <person name="Seki M."/>
            <person name="Sakurai T."/>
            <person name="Satou M."/>
            <person name="Tamse R."/>
            <person name="Vaysberg M."/>
            <person name="Wallender E.K."/>
            <person name="Wong C."/>
            <person name="Yamamura Y."/>
            <person name="Yuan S."/>
            <person name="Shinozaki K."/>
            <person name="Davis R.W."/>
            <person name="Theologis A."/>
            <person name="Ecker J.R."/>
        </authorList>
    </citation>
    <scope>NUCLEOTIDE SEQUENCE [LARGE SCALE MRNA] (ISOFORM 1)</scope>
    <source>
        <strain>cv. Columbia</strain>
    </source>
</reference>
<comment type="subcellular location">
    <subcellularLocation>
        <location evidence="3">Membrane</location>
        <topology evidence="3">Single-pass membrane protein</topology>
    </subcellularLocation>
</comment>
<comment type="alternative products">
    <event type="alternative splicing"/>
    <isoform>
        <id>Q9SA00-1</id>
        <name>1</name>
        <sequence type="displayed"/>
    </isoform>
    <isoform>
        <id>Q9SA00-2</id>
        <name>2</name>
        <sequence type="described" ref="VSP_039984"/>
    </isoform>
</comment>
<dbReference type="EMBL" id="AC007894">
    <property type="protein sequence ID" value="AAD46003.1"/>
    <property type="molecule type" value="Genomic_DNA"/>
</dbReference>
<dbReference type="EMBL" id="CP002684">
    <property type="protein sequence ID" value="AEE31738.1"/>
    <property type="molecule type" value="Genomic_DNA"/>
</dbReference>
<dbReference type="EMBL" id="CP002684">
    <property type="protein sequence ID" value="AEE31739.1"/>
    <property type="molecule type" value="Genomic_DNA"/>
</dbReference>
<dbReference type="EMBL" id="AY059876">
    <property type="protein sequence ID" value="AAL24358.1"/>
    <property type="molecule type" value="mRNA"/>
</dbReference>
<dbReference type="EMBL" id="AY093358">
    <property type="protein sequence ID" value="AAM13357.1"/>
    <property type="molecule type" value="mRNA"/>
</dbReference>
<dbReference type="RefSeq" id="NP_001117412.1">
    <molecule id="Q9SA00-2"/>
    <property type="nucleotide sequence ID" value="NM_001123940.1"/>
</dbReference>
<dbReference type="RefSeq" id="NP_564452.1">
    <molecule id="Q9SA00-1"/>
    <property type="nucleotide sequence ID" value="NM_103198.3"/>
</dbReference>
<dbReference type="SMR" id="Q9SA00"/>
<dbReference type="BioGRID" id="25614">
    <property type="interactions" value="5"/>
</dbReference>
<dbReference type="FunCoup" id="Q9SA00">
    <property type="interactions" value="355"/>
</dbReference>
<dbReference type="IntAct" id="Q9SA00">
    <property type="interactions" value="6"/>
</dbReference>
<dbReference type="STRING" id="3702.Q9SA00"/>
<dbReference type="GlyCosmos" id="Q9SA00">
    <property type="glycosylation" value="2 sites, No reported glycans"/>
</dbReference>
<dbReference type="GlyGen" id="Q9SA00">
    <property type="glycosylation" value="2 sites"/>
</dbReference>
<dbReference type="iPTMnet" id="Q9SA00"/>
<dbReference type="PaxDb" id="3702-AT1G34780.1"/>
<dbReference type="ProteomicsDB" id="240600">
    <molecule id="Q9SA00-1"/>
</dbReference>
<dbReference type="EnsemblPlants" id="AT1G34780.1">
    <molecule id="Q9SA00-1"/>
    <property type="protein sequence ID" value="AT1G34780.1"/>
    <property type="gene ID" value="AT1G34780"/>
</dbReference>
<dbReference type="EnsemblPlants" id="AT1G34780.2">
    <molecule id="Q9SA00-2"/>
    <property type="protein sequence ID" value="AT1G34780.2"/>
    <property type="gene ID" value="AT1G34780"/>
</dbReference>
<dbReference type="GeneID" id="840382"/>
<dbReference type="Gramene" id="AT1G34780.1">
    <molecule id="Q9SA00-1"/>
    <property type="protein sequence ID" value="AT1G34780.1"/>
    <property type="gene ID" value="AT1G34780"/>
</dbReference>
<dbReference type="Gramene" id="AT1G34780.2">
    <molecule id="Q9SA00-2"/>
    <property type="protein sequence ID" value="AT1G34780.2"/>
    <property type="gene ID" value="AT1G34780"/>
</dbReference>
<dbReference type="KEGG" id="ath:AT1G34780"/>
<dbReference type="Araport" id="AT1G34780"/>
<dbReference type="TAIR" id="AT1G34780">
    <property type="gene designation" value="APRL4"/>
</dbReference>
<dbReference type="eggNOG" id="KOG2640">
    <property type="taxonomic scope" value="Eukaryota"/>
</dbReference>
<dbReference type="InParanoid" id="Q9SA00"/>
<dbReference type="OMA" id="MIHRNTH"/>
<dbReference type="PhylomeDB" id="Q9SA00"/>
<dbReference type="PRO" id="PR:Q9SA00"/>
<dbReference type="Proteomes" id="UP000006548">
    <property type="component" value="Chromosome 1"/>
</dbReference>
<dbReference type="ExpressionAtlas" id="Q9SA00">
    <property type="expression patterns" value="baseline and differential"/>
</dbReference>
<dbReference type="GO" id="GO:0016020">
    <property type="term" value="C:membrane"/>
    <property type="evidence" value="ECO:0007669"/>
    <property type="project" value="UniProtKB-SubCell"/>
</dbReference>
<dbReference type="CDD" id="cd02999">
    <property type="entry name" value="PDI_a_ERp44_like"/>
    <property type="match status" value="1"/>
</dbReference>
<dbReference type="Gene3D" id="3.40.30.10">
    <property type="entry name" value="Glutaredoxin"/>
    <property type="match status" value="1"/>
</dbReference>
<dbReference type="InterPro" id="IPR044606">
    <property type="entry name" value="APRL4/6"/>
</dbReference>
<dbReference type="InterPro" id="IPR036249">
    <property type="entry name" value="Thioredoxin-like_sf"/>
</dbReference>
<dbReference type="InterPro" id="IPR013766">
    <property type="entry name" value="Thioredoxin_domain"/>
</dbReference>
<dbReference type="PANTHER" id="PTHR46854">
    <property type="entry name" value="5'-ADENYLYLSULFATE REDUCTASE-LIKE 4-RELATED"/>
    <property type="match status" value="1"/>
</dbReference>
<dbReference type="PANTHER" id="PTHR46854:SF1">
    <property type="entry name" value="5'-ADENYLYLSULFATE REDUCTASE-LIKE 4-RELATED"/>
    <property type="match status" value="1"/>
</dbReference>
<dbReference type="Pfam" id="PF00085">
    <property type="entry name" value="Thioredoxin"/>
    <property type="match status" value="1"/>
</dbReference>
<dbReference type="SUPFAM" id="SSF52833">
    <property type="entry name" value="Thioredoxin-like"/>
    <property type="match status" value="1"/>
</dbReference>
<dbReference type="PROSITE" id="PS51352">
    <property type="entry name" value="THIOREDOXIN_2"/>
    <property type="match status" value="1"/>
</dbReference>
<protein>
    <recommendedName>
        <fullName>5'-adenylylsulfate reductase-like 4</fullName>
    </recommendedName>
    <alternativeName>
        <fullName>Adenosine 5'-phosphosulfate reductase-like 4</fullName>
        <shortName>APR-like 4</shortName>
        <shortName>AtAPRL4</shortName>
    </alternativeName>
</protein>
<proteinExistence type="evidence at transcript level"/>
<accession>Q9SA00</accession>
<accession>B3H6M4</accession>
<gene>
    <name type="primary">APRL4</name>
    <name type="ordered locus">At1g34780</name>
    <name type="ORF">F11O6.7</name>
    <name type="ORF">F21H2.1</name>
</gene>
<organism>
    <name type="scientific">Arabidopsis thaliana</name>
    <name type="common">Mouse-ear cress</name>
    <dbReference type="NCBI Taxonomy" id="3702"/>
    <lineage>
        <taxon>Eukaryota</taxon>
        <taxon>Viridiplantae</taxon>
        <taxon>Streptophyta</taxon>
        <taxon>Embryophyta</taxon>
        <taxon>Tracheophyta</taxon>
        <taxon>Spermatophyta</taxon>
        <taxon>Magnoliopsida</taxon>
        <taxon>eudicotyledons</taxon>
        <taxon>Gunneridae</taxon>
        <taxon>Pentapetalae</taxon>
        <taxon>rosids</taxon>
        <taxon>malvids</taxon>
        <taxon>Brassicales</taxon>
        <taxon>Brassicaceae</taxon>
        <taxon>Camelineae</taxon>
        <taxon>Arabidopsis</taxon>
    </lineage>
</organism>
<name>APRL4_ARATH</name>
<sequence length="310" mass="35008">MEKEILLLLLVIMFLTVADVDAVRVPFCATKSAKDSIFGLRDQTCSVSGVESDERPRFVAVTEGDERWLQIALDMIHKNKCDYVALLFYASWCPFSRSFRPSFDVISSLYSSIPHFAIKESSIKPSTLSKYGVHGFPTLLLLNSTMRARYRGTRMLDSLVAFYSDVTGIETLDKTSLERSVSVPHLGNENNTEPENCPFTWARSPENMLRQETYLALAIVFVLLRLLHLIYPTLVVFMKFTWRRIAQNMRLESLLEHTVGFLSRAVQLCMHRRSNLQGGAMNARAWASKSLATVSIGDSSSSNRRSSSSQ</sequence>